<proteinExistence type="inferred from homology"/>
<dbReference type="EC" id="2.7.7.6" evidence="1"/>
<dbReference type="EMBL" id="AY916449">
    <property type="protein sequence ID" value="AAW82494.1"/>
    <property type="status" value="ALT_INIT"/>
    <property type="molecule type" value="Genomic_DNA"/>
</dbReference>
<dbReference type="RefSeq" id="YP_358567.2">
    <property type="nucleotide sequence ID" value="NC_007499.1"/>
</dbReference>
<dbReference type="SMR" id="Q3BAQ1"/>
<dbReference type="GeneID" id="3741669"/>
<dbReference type="GO" id="GO:0009507">
    <property type="term" value="C:chloroplast"/>
    <property type="evidence" value="ECO:0007669"/>
    <property type="project" value="UniProtKB-SubCell"/>
</dbReference>
<dbReference type="GO" id="GO:0000428">
    <property type="term" value="C:DNA-directed RNA polymerase complex"/>
    <property type="evidence" value="ECO:0007669"/>
    <property type="project" value="UniProtKB-KW"/>
</dbReference>
<dbReference type="GO" id="GO:0005739">
    <property type="term" value="C:mitochondrion"/>
    <property type="evidence" value="ECO:0007669"/>
    <property type="project" value="GOC"/>
</dbReference>
<dbReference type="GO" id="GO:0003677">
    <property type="term" value="F:DNA binding"/>
    <property type="evidence" value="ECO:0007669"/>
    <property type="project" value="UniProtKB-UniRule"/>
</dbReference>
<dbReference type="GO" id="GO:0003899">
    <property type="term" value="F:DNA-directed RNA polymerase activity"/>
    <property type="evidence" value="ECO:0007669"/>
    <property type="project" value="UniProtKB-UniRule"/>
</dbReference>
<dbReference type="GO" id="GO:0000287">
    <property type="term" value="F:magnesium ion binding"/>
    <property type="evidence" value="ECO:0007669"/>
    <property type="project" value="UniProtKB-UniRule"/>
</dbReference>
<dbReference type="GO" id="GO:0008270">
    <property type="term" value="F:zinc ion binding"/>
    <property type="evidence" value="ECO:0007669"/>
    <property type="project" value="UniProtKB-UniRule"/>
</dbReference>
<dbReference type="GO" id="GO:0006351">
    <property type="term" value="P:DNA-templated transcription"/>
    <property type="evidence" value="ECO:0007669"/>
    <property type="project" value="UniProtKB-UniRule"/>
</dbReference>
<dbReference type="FunFam" id="4.10.860.120:FF:000007">
    <property type="entry name" value="DNA-directed RNA polymerase subunit gamma"/>
    <property type="match status" value="1"/>
</dbReference>
<dbReference type="Gene3D" id="1.10.40.90">
    <property type="match status" value="1"/>
</dbReference>
<dbReference type="Gene3D" id="2.40.40.20">
    <property type="match status" value="1"/>
</dbReference>
<dbReference type="Gene3D" id="4.10.860.120">
    <property type="entry name" value="RNA polymerase II, clamp domain"/>
    <property type="match status" value="1"/>
</dbReference>
<dbReference type="Gene3D" id="1.10.274.100">
    <property type="entry name" value="RNA polymerase Rpb1, domain 3"/>
    <property type="match status" value="1"/>
</dbReference>
<dbReference type="HAMAP" id="MF_01323">
    <property type="entry name" value="RNApol_bact_RpoC1"/>
    <property type="match status" value="1"/>
</dbReference>
<dbReference type="InterPro" id="IPR045867">
    <property type="entry name" value="DNA-dir_RpoC_beta_prime"/>
</dbReference>
<dbReference type="InterPro" id="IPR000722">
    <property type="entry name" value="RNA_pol_asu"/>
</dbReference>
<dbReference type="InterPro" id="IPR006592">
    <property type="entry name" value="RNA_pol_N"/>
</dbReference>
<dbReference type="InterPro" id="IPR007080">
    <property type="entry name" value="RNA_pol_Rpb1_1"/>
</dbReference>
<dbReference type="InterPro" id="IPR042102">
    <property type="entry name" value="RNA_pol_Rpb1_3_sf"/>
</dbReference>
<dbReference type="InterPro" id="IPR044893">
    <property type="entry name" value="RNA_pol_Rpb1_clamp_domain"/>
</dbReference>
<dbReference type="InterPro" id="IPR034678">
    <property type="entry name" value="RNApol_RpoC1"/>
</dbReference>
<dbReference type="PANTHER" id="PTHR19376">
    <property type="entry name" value="DNA-DIRECTED RNA POLYMERASE"/>
    <property type="match status" value="1"/>
</dbReference>
<dbReference type="PANTHER" id="PTHR19376:SF54">
    <property type="entry name" value="DNA-DIRECTED RNA POLYMERASE SUBUNIT BETA"/>
    <property type="match status" value="1"/>
</dbReference>
<dbReference type="Pfam" id="PF04997">
    <property type="entry name" value="RNA_pol_Rpb1_1"/>
    <property type="match status" value="1"/>
</dbReference>
<dbReference type="Pfam" id="PF00623">
    <property type="entry name" value="RNA_pol_Rpb1_2"/>
    <property type="match status" value="2"/>
</dbReference>
<dbReference type="SMART" id="SM00663">
    <property type="entry name" value="RPOLA_N"/>
    <property type="match status" value="1"/>
</dbReference>
<dbReference type="SUPFAM" id="SSF64484">
    <property type="entry name" value="beta and beta-prime subunits of DNA dependent RNA-polymerase"/>
    <property type="match status" value="1"/>
</dbReference>
<keyword id="KW-0150">Chloroplast</keyword>
<keyword id="KW-0240">DNA-directed RNA polymerase</keyword>
<keyword id="KW-0460">Magnesium</keyword>
<keyword id="KW-0479">Metal-binding</keyword>
<keyword id="KW-0548">Nucleotidyltransferase</keyword>
<keyword id="KW-0934">Plastid</keyword>
<keyword id="KW-0804">Transcription</keyword>
<keyword id="KW-0808">Transferase</keyword>
<keyword id="KW-0862">Zinc</keyword>
<evidence type="ECO:0000255" key="1">
    <source>
        <dbReference type="HAMAP-Rule" id="MF_01323"/>
    </source>
</evidence>
<evidence type="ECO:0000305" key="2"/>
<gene>
    <name evidence="1" type="primary">rpoC1</name>
</gene>
<accession>Q3BAQ1</accession>
<reference key="1">
    <citation type="journal article" date="2006" name="Mol. Biol. Evol.">
        <title>The chloroplast genome of Phalaenopsis aphrodite (Orchidaceae): comparative analysis of evolutionary rate with that of grasses and its phylogenetic implications.</title>
        <authorList>
            <person name="Chang C.-C."/>
            <person name="Lin H.-C."/>
            <person name="Lin I.-P."/>
            <person name="Chow T.-Y."/>
            <person name="Chen H.-H."/>
            <person name="Chen W.-H."/>
            <person name="Cheng C.-H."/>
            <person name="Lin C.-Y."/>
            <person name="Liu S.-M."/>
            <person name="Chang C.-C."/>
            <person name="Chaw S.-M."/>
        </authorList>
    </citation>
    <scope>NUCLEOTIDE SEQUENCE [LARGE SCALE GENOMIC DNA]</scope>
    <source>
        <strain>cv. Taisugar TS-97</strain>
    </source>
</reference>
<protein>
    <recommendedName>
        <fullName evidence="1">DNA-directed RNA polymerase subunit beta'</fullName>
        <ecNumber evidence="1">2.7.7.6</ecNumber>
    </recommendedName>
    <alternativeName>
        <fullName evidence="1">PEP</fullName>
    </alternativeName>
    <alternativeName>
        <fullName evidence="1">Plastid-encoded RNA polymerase subunit beta'</fullName>
        <shortName evidence="1">RNA polymerase subunit beta'</shortName>
    </alternativeName>
</protein>
<organism>
    <name type="scientific">Phalaenopsis aphrodite subsp. formosana</name>
    <name type="common">Moth orchid</name>
    <dbReference type="NCBI Taxonomy" id="308872"/>
    <lineage>
        <taxon>Eukaryota</taxon>
        <taxon>Viridiplantae</taxon>
        <taxon>Streptophyta</taxon>
        <taxon>Embryophyta</taxon>
        <taxon>Tracheophyta</taxon>
        <taxon>Spermatophyta</taxon>
        <taxon>Magnoliopsida</taxon>
        <taxon>Liliopsida</taxon>
        <taxon>Asparagales</taxon>
        <taxon>Orchidaceae</taxon>
        <taxon>Epidendroideae</taxon>
        <taxon>Vandeae</taxon>
        <taxon>Aeridinae</taxon>
        <taxon>Phalaenopsis</taxon>
    </lineage>
</organism>
<sequence length="679" mass="78211">MIDQYKHQQLRIGSVSPQQIRAWAKKILPNGEIVGEVTKPYTFHYKTNKPEKDGLFCERISGPIKSGICACGNYRGIGTEKEDPKFCEECGVEFVDSRIRRYQMGYIKLTCPVTHVWYLKRLPSYIANLLDKPLRELEGLVYCDFSFARSIAKKPTFLRLRGSFEYEIQSWQYSIPLFFTTQGFETFRNREISTGAGAIREQLADSDLRIITDNSLLEWKELGDEESAGNEWEEKKIRRRKDFLVRRIELAKHFLRTNVDPEWMVLCLLPVLPPELRPIIQIDGGKLMSSDINELYRRVIYRNNTLTDLLATSRSTPGELVMCQEKLVQEAVDTLFDNGIRGQPMRDGHNKVYKSFSDVIEGKEGRFRETLLGKRVDYSGRSVIVVGPLLSLHQCGLPREIAIELFQAFVIRGLIRQDVASNTGIAKSKIREKEPIVWEILQEVMQGHPVLLNRAPTLHRLGIQAFQPILVEGRAICLHPLVCKGFNADFDGDQMAVHVPLSLEAQAEARLLMFSHMNLLSPAIGDPVSVPTQDMLIGLYVLTIGNPRGICANRYNQSNSNCRNYKKEKVYKNDFKYTKELYFSSSYDALGAYRQKRIHLDSPLWLRWRLDQRVVGSREVPIEIQYESFGNYNEIYKHYQIIGSVKIEICCIYIRTTAGHISFYREIEEAIQGFWRAYS</sequence>
<geneLocation type="chloroplast"/>
<comment type="function">
    <text evidence="1">DNA-dependent RNA polymerase catalyzes the transcription of DNA into RNA using the four ribonucleoside triphosphates as substrates.</text>
</comment>
<comment type="catalytic activity">
    <reaction evidence="1">
        <text>RNA(n) + a ribonucleoside 5'-triphosphate = RNA(n+1) + diphosphate</text>
        <dbReference type="Rhea" id="RHEA:21248"/>
        <dbReference type="Rhea" id="RHEA-COMP:14527"/>
        <dbReference type="Rhea" id="RHEA-COMP:17342"/>
        <dbReference type="ChEBI" id="CHEBI:33019"/>
        <dbReference type="ChEBI" id="CHEBI:61557"/>
        <dbReference type="ChEBI" id="CHEBI:140395"/>
        <dbReference type="EC" id="2.7.7.6"/>
    </reaction>
</comment>
<comment type="cofactor">
    <cofactor evidence="1">
        <name>Mg(2+)</name>
        <dbReference type="ChEBI" id="CHEBI:18420"/>
    </cofactor>
    <text evidence="1">Binds 1 Mg(2+) ion per subunit.</text>
</comment>
<comment type="cofactor">
    <cofactor evidence="1">
        <name>Zn(2+)</name>
        <dbReference type="ChEBI" id="CHEBI:29105"/>
    </cofactor>
    <text evidence="1">Binds 1 Zn(2+) ion per subunit.</text>
</comment>
<comment type="subunit">
    <text evidence="1">In plastids the minimal PEP RNA polymerase catalytic core is composed of four subunits: alpha, beta, beta', and beta''. When a (nuclear-encoded) sigma factor is associated with the core the holoenzyme is formed, which can initiate transcription.</text>
</comment>
<comment type="subcellular location">
    <subcellularLocation>
        <location evidence="1">Plastid</location>
        <location evidence="1">Chloroplast</location>
    </subcellularLocation>
</comment>
<comment type="similarity">
    <text evidence="1">Belongs to the RNA polymerase beta' chain family. RpoC1 subfamily.</text>
</comment>
<comment type="sequence caution" evidence="2">
    <conflict type="erroneous initiation">
        <sequence resource="EMBL-CDS" id="AAW82494"/>
    </conflict>
    <text>Extended N-terminus.</text>
</comment>
<feature type="chain" id="PRO_0000225324" description="DNA-directed RNA polymerase subunit beta'">
    <location>
        <begin position="1"/>
        <end position="679"/>
    </location>
</feature>
<feature type="binding site" evidence="1">
    <location>
        <position position="69"/>
    </location>
    <ligand>
        <name>Zn(2+)</name>
        <dbReference type="ChEBI" id="CHEBI:29105"/>
    </ligand>
</feature>
<feature type="binding site" evidence="1">
    <location>
        <position position="71"/>
    </location>
    <ligand>
        <name>Zn(2+)</name>
        <dbReference type="ChEBI" id="CHEBI:29105"/>
    </ligand>
</feature>
<feature type="binding site" evidence="1">
    <location>
        <position position="87"/>
    </location>
    <ligand>
        <name>Zn(2+)</name>
        <dbReference type="ChEBI" id="CHEBI:29105"/>
    </ligand>
</feature>
<feature type="binding site" evidence="1">
    <location>
        <position position="90"/>
    </location>
    <ligand>
        <name>Zn(2+)</name>
        <dbReference type="ChEBI" id="CHEBI:29105"/>
    </ligand>
</feature>
<feature type="binding site" evidence="1">
    <location>
        <position position="489"/>
    </location>
    <ligand>
        <name>Mg(2+)</name>
        <dbReference type="ChEBI" id="CHEBI:18420"/>
    </ligand>
</feature>
<feature type="binding site" evidence="1">
    <location>
        <position position="491"/>
    </location>
    <ligand>
        <name>Mg(2+)</name>
        <dbReference type="ChEBI" id="CHEBI:18420"/>
    </ligand>
</feature>
<feature type="binding site" evidence="1">
    <location>
        <position position="493"/>
    </location>
    <ligand>
        <name>Mg(2+)</name>
        <dbReference type="ChEBI" id="CHEBI:18420"/>
    </ligand>
</feature>
<name>RPOC1_PHAAO</name>